<evidence type="ECO:0000250" key="1"/>
<evidence type="ECO:0000255" key="2">
    <source>
        <dbReference type="PROSITE-ProRule" id="PRU00169"/>
    </source>
</evidence>
<evidence type="ECO:0000305" key="3"/>
<keyword id="KW-0010">Activator</keyword>
<keyword id="KW-0963">Cytoplasm</keyword>
<keyword id="KW-0238">DNA-binding</keyword>
<keyword id="KW-0597">Phosphoprotein</keyword>
<keyword id="KW-1185">Reference proteome</keyword>
<keyword id="KW-0804">Transcription</keyword>
<keyword id="KW-0805">Transcription regulation</keyword>
<keyword id="KW-0902">Two-component regulatory system</keyword>
<gene>
    <name type="primary">dpiA</name>
    <name type="synonym">citB</name>
    <name type="ordered locus">Z0765</name>
    <name type="ordered locus">ECs0659</name>
</gene>
<reference key="1">
    <citation type="journal article" date="2001" name="Nature">
        <title>Genome sequence of enterohaemorrhagic Escherichia coli O157:H7.</title>
        <authorList>
            <person name="Perna N.T."/>
            <person name="Plunkett G. III"/>
            <person name="Burland V."/>
            <person name="Mau B."/>
            <person name="Glasner J.D."/>
            <person name="Rose D.J."/>
            <person name="Mayhew G.F."/>
            <person name="Evans P.S."/>
            <person name="Gregor J."/>
            <person name="Kirkpatrick H.A."/>
            <person name="Posfai G."/>
            <person name="Hackett J."/>
            <person name="Klink S."/>
            <person name="Boutin A."/>
            <person name="Shao Y."/>
            <person name="Miller L."/>
            <person name="Grotbeck E.J."/>
            <person name="Davis N.W."/>
            <person name="Lim A."/>
            <person name="Dimalanta E.T."/>
            <person name="Potamousis K."/>
            <person name="Apodaca J."/>
            <person name="Anantharaman T.S."/>
            <person name="Lin J."/>
            <person name="Yen G."/>
            <person name="Schwartz D.C."/>
            <person name="Welch R.A."/>
            <person name="Blattner F.R."/>
        </authorList>
    </citation>
    <scope>NUCLEOTIDE SEQUENCE [LARGE SCALE GENOMIC DNA]</scope>
    <source>
        <strain>O157:H7 / EDL933 / ATCC 700927 / EHEC</strain>
    </source>
</reference>
<reference key="2">
    <citation type="journal article" date="2001" name="DNA Res.">
        <title>Complete genome sequence of enterohemorrhagic Escherichia coli O157:H7 and genomic comparison with a laboratory strain K-12.</title>
        <authorList>
            <person name="Hayashi T."/>
            <person name="Makino K."/>
            <person name="Ohnishi M."/>
            <person name="Kurokawa K."/>
            <person name="Ishii K."/>
            <person name="Yokoyama K."/>
            <person name="Han C.-G."/>
            <person name="Ohtsubo E."/>
            <person name="Nakayama K."/>
            <person name="Murata T."/>
            <person name="Tanaka M."/>
            <person name="Tobe T."/>
            <person name="Iida T."/>
            <person name="Takami H."/>
            <person name="Honda T."/>
            <person name="Sasakawa C."/>
            <person name="Ogasawara N."/>
            <person name="Yasunaga T."/>
            <person name="Kuhara S."/>
            <person name="Shiba T."/>
            <person name="Hattori M."/>
            <person name="Shinagawa H."/>
        </authorList>
    </citation>
    <scope>NUCLEOTIDE SEQUENCE [LARGE SCALE GENOMIC DNA]</scope>
    <source>
        <strain>O157:H7 / Sakai / RIMD 0509952 / EHEC</strain>
    </source>
</reference>
<organism>
    <name type="scientific">Escherichia coli O157:H7</name>
    <dbReference type="NCBI Taxonomy" id="83334"/>
    <lineage>
        <taxon>Bacteria</taxon>
        <taxon>Pseudomonadati</taxon>
        <taxon>Pseudomonadota</taxon>
        <taxon>Gammaproteobacteria</taxon>
        <taxon>Enterobacterales</taxon>
        <taxon>Enterobacteriaceae</taxon>
        <taxon>Escherichia</taxon>
    </lineage>
</organism>
<comment type="function">
    <text evidence="1">Member of the two-component regulatory system DpiA/DpiB, which is essential for expression of citrate-specific fermentation genes and genes involved in plasmid inheritance. Could be involved in response to both the presence of citrate and external redox conditions (By similarity).</text>
</comment>
<comment type="subcellular location">
    <subcellularLocation>
        <location evidence="3">Cytoplasm</location>
    </subcellularLocation>
</comment>
<comment type="PTM">
    <text evidence="1">Phosphorylated and activated by DpiB.</text>
</comment>
<sequence>MTAPLTLLIVEDETPLAEMHAEYIRHIPGFSQILLAGNLAQARMMIERFKPGLILLDNYLPDGRGINLLHELVQAHYPGDVVFTTAASDMETVSEAVRCGVFDYLIKPIAYERLGQTLTRFRQRKHMLESIDSASQKQIDEMFNAYARGEPKDELPTGIDPLTLNAVRKLFKEPGVQHTAETVAQALTISRTTARRYLEYCASRHLIIAEIVHGKVGRPQRIYHSG</sequence>
<protein>
    <recommendedName>
        <fullName>Transcriptional regulatory protein DpiA</fullName>
    </recommendedName>
    <alternativeName>
        <fullName>Destabilizer of plasmid inheritance</fullName>
    </alternativeName>
</protein>
<accession>P0AEF6</accession>
<accession>Q54149</accession>
<name>DPIA_ECO57</name>
<feature type="chain" id="PRO_0000081069" description="Transcriptional regulatory protein DpiA">
    <location>
        <begin position="1"/>
        <end position="226"/>
    </location>
</feature>
<feature type="domain" description="Response regulatory" evidence="2">
    <location>
        <begin position="6"/>
        <end position="122"/>
    </location>
</feature>
<feature type="DNA-binding region" description="H-T-H motif" evidence="1">
    <location>
        <begin position="180"/>
        <end position="199"/>
    </location>
</feature>
<feature type="modified residue" description="4-aspartylphosphate" evidence="2">
    <location>
        <position position="57"/>
    </location>
</feature>
<dbReference type="EMBL" id="AE005174">
    <property type="protein sequence ID" value="AAG54955.1"/>
    <property type="molecule type" value="Genomic_DNA"/>
</dbReference>
<dbReference type="EMBL" id="BA000007">
    <property type="protein sequence ID" value="BAB34082.1"/>
    <property type="molecule type" value="Genomic_DNA"/>
</dbReference>
<dbReference type="PIR" id="C90711">
    <property type="entry name" value="C90711"/>
</dbReference>
<dbReference type="PIR" id="G85561">
    <property type="entry name" value="G85561"/>
</dbReference>
<dbReference type="RefSeq" id="NP_308686.1">
    <property type="nucleotide sequence ID" value="NC_002695.1"/>
</dbReference>
<dbReference type="RefSeq" id="WP_000126500.1">
    <property type="nucleotide sequence ID" value="NZ_VOAI01000012.1"/>
</dbReference>
<dbReference type="SMR" id="P0AEF6"/>
<dbReference type="STRING" id="155864.Z0765"/>
<dbReference type="GeneID" id="75205018"/>
<dbReference type="GeneID" id="917019"/>
<dbReference type="KEGG" id="ece:Z0765"/>
<dbReference type="KEGG" id="ecs:ECs_0659"/>
<dbReference type="PATRIC" id="fig|386585.9.peg.770"/>
<dbReference type="eggNOG" id="COG4565">
    <property type="taxonomic scope" value="Bacteria"/>
</dbReference>
<dbReference type="HOGENOM" id="CLU_000445_39_0_6"/>
<dbReference type="OMA" id="PEHRYVW"/>
<dbReference type="Proteomes" id="UP000000558">
    <property type="component" value="Chromosome"/>
</dbReference>
<dbReference type="Proteomes" id="UP000002519">
    <property type="component" value="Chromosome"/>
</dbReference>
<dbReference type="GO" id="GO:0005737">
    <property type="term" value="C:cytoplasm"/>
    <property type="evidence" value="ECO:0007669"/>
    <property type="project" value="UniProtKB-SubCell"/>
</dbReference>
<dbReference type="GO" id="GO:0003677">
    <property type="term" value="F:DNA binding"/>
    <property type="evidence" value="ECO:0007669"/>
    <property type="project" value="UniProtKB-KW"/>
</dbReference>
<dbReference type="GO" id="GO:0003700">
    <property type="term" value="F:DNA-binding transcription factor activity"/>
    <property type="evidence" value="ECO:0007669"/>
    <property type="project" value="InterPro"/>
</dbReference>
<dbReference type="GO" id="GO:0000156">
    <property type="term" value="F:phosphorelay response regulator activity"/>
    <property type="evidence" value="ECO:0007669"/>
    <property type="project" value="TreeGrafter"/>
</dbReference>
<dbReference type="CDD" id="cd19925">
    <property type="entry name" value="REC_citrate_TCS"/>
    <property type="match status" value="1"/>
</dbReference>
<dbReference type="FunFam" id="3.40.50.2300:FF:000057">
    <property type="entry name" value="Transcriptional regulatory protein"/>
    <property type="match status" value="1"/>
</dbReference>
<dbReference type="Gene3D" id="3.40.50.2300">
    <property type="match status" value="1"/>
</dbReference>
<dbReference type="InterPro" id="IPR051271">
    <property type="entry name" value="2C-system_Tx_regulators"/>
</dbReference>
<dbReference type="InterPro" id="IPR011006">
    <property type="entry name" value="CheY-like_superfamily"/>
</dbReference>
<dbReference type="InterPro" id="IPR048714">
    <property type="entry name" value="DpiA-like_HTH"/>
</dbReference>
<dbReference type="InterPro" id="IPR024187">
    <property type="entry name" value="Sig_transdc_resp-reg_cit/mal"/>
</dbReference>
<dbReference type="InterPro" id="IPR001789">
    <property type="entry name" value="Sig_transdc_resp-reg_receiver"/>
</dbReference>
<dbReference type="NCBIfam" id="NF007467">
    <property type="entry name" value="PRK10046.1"/>
    <property type="match status" value="1"/>
</dbReference>
<dbReference type="PANTHER" id="PTHR45526:SF1">
    <property type="entry name" value="TRANSCRIPTIONAL REGULATORY PROTEIN DCUR-RELATED"/>
    <property type="match status" value="1"/>
</dbReference>
<dbReference type="PANTHER" id="PTHR45526">
    <property type="entry name" value="TRANSCRIPTIONAL REGULATORY PROTEIN DPIA"/>
    <property type="match status" value="1"/>
</dbReference>
<dbReference type="Pfam" id="PF20714">
    <property type="entry name" value="HTH_64"/>
    <property type="match status" value="1"/>
</dbReference>
<dbReference type="Pfam" id="PF00072">
    <property type="entry name" value="Response_reg"/>
    <property type="match status" value="1"/>
</dbReference>
<dbReference type="PIRSF" id="PIRSF006171">
    <property type="entry name" value="RR_citrat_malat"/>
    <property type="match status" value="1"/>
</dbReference>
<dbReference type="SMART" id="SM00448">
    <property type="entry name" value="REC"/>
    <property type="match status" value="1"/>
</dbReference>
<dbReference type="SUPFAM" id="SSF52172">
    <property type="entry name" value="CheY-like"/>
    <property type="match status" value="1"/>
</dbReference>
<dbReference type="PROSITE" id="PS50110">
    <property type="entry name" value="RESPONSE_REGULATORY"/>
    <property type="match status" value="1"/>
</dbReference>
<proteinExistence type="inferred from homology"/>